<gene>
    <name type="primary">sodA</name>
    <name type="ordered locus">SACOL1610</name>
</gene>
<feature type="chain" id="PRO_0000160079" description="Superoxide dismutase [Mn/Fe] 1">
    <location>
        <begin position="1"/>
        <end position="199"/>
    </location>
</feature>
<feature type="binding site" evidence="2">
    <location>
        <position position="27"/>
    </location>
    <ligand>
        <name>Fe(3+)</name>
        <dbReference type="ChEBI" id="CHEBI:29034"/>
    </ligand>
</feature>
<feature type="binding site" evidence="2">
    <location>
        <position position="27"/>
    </location>
    <ligand>
        <name>Mn(2+)</name>
        <dbReference type="ChEBI" id="CHEBI:29035"/>
    </ligand>
</feature>
<feature type="binding site" evidence="2">
    <location>
        <position position="81"/>
    </location>
    <ligand>
        <name>Fe(3+)</name>
        <dbReference type="ChEBI" id="CHEBI:29034"/>
    </ligand>
</feature>
<feature type="binding site" evidence="2">
    <location>
        <position position="81"/>
    </location>
    <ligand>
        <name>Mn(2+)</name>
        <dbReference type="ChEBI" id="CHEBI:29035"/>
    </ligand>
</feature>
<feature type="binding site" evidence="2">
    <location>
        <position position="161"/>
    </location>
    <ligand>
        <name>Fe(3+)</name>
        <dbReference type="ChEBI" id="CHEBI:29034"/>
    </ligand>
</feature>
<feature type="binding site" evidence="2">
    <location>
        <position position="161"/>
    </location>
    <ligand>
        <name>Mn(2+)</name>
        <dbReference type="ChEBI" id="CHEBI:29035"/>
    </ligand>
</feature>
<feature type="binding site" evidence="2">
    <location>
        <position position="165"/>
    </location>
    <ligand>
        <name>Fe(3+)</name>
        <dbReference type="ChEBI" id="CHEBI:29034"/>
    </ligand>
</feature>
<feature type="binding site" evidence="2">
    <location>
        <position position="165"/>
    </location>
    <ligand>
        <name>Mn(2+)</name>
        <dbReference type="ChEBI" id="CHEBI:29035"/>
    </ligand>
</feature>
<keyword id="KW-0408">Iron</keyword>
<keyword id="KW-0464">Manganese</keyword>
<keyword id="KW-0479">Metal-binding</keyword>
<keyword id="KW-0560">Oxidoreductase</keyword>
<keyword id="KW-0346">Stress response</keyword>
<name>SODM1_STAAC</name>
<organism>
    <name type="scientific">Staphylococcus aureus (strain COL)</name>
    <dbReference type="NCBI Taxonomy" id="93062"/>
    <lineage>
        <taxon>Bacteria</taxon>
        <taxon>Bacillati</taxon>
        <taxon>Bacillota</taxon>
        <taxon>Bacilli</taxon>
        <taxon>Bacillales</taxon>
        <taxon>Staphylococcaceae</taxon>
        <taxon>Staphylococcus</taxon>
    </lineage>
</organism>
<proteinExistence type="inferred from homology"/>
<reference key="1">
    <citation type="journal article" date="2005" name="J. Bacteriol.">
        <title>Insights on evolution of virulence and resistance from the complete genome analysis of an early methicillin-resistant Staphylococcus aureus strain and a biofilm-producing methicillin-resistant Staphylococcus epidermidis strain.</title>
        <authorList>
            <person name="Gill S.R."/>
            <person name="Fouts D.E."/>
            <person name="Archer G.L."/>
            <person name="Mongodin E.F."/>
            <person name="DeBoy R.T."/>
            <person name="Ravel J."/>
            <person name="Paulsen I.T."/>
            <person name="Kolonay J.F."/>
            <person name="Brinkac L.M."/>
            <person name="Beanan M.J."/>
            <person name="Dodson R.J."/>
            <person name="Daugherty S.C."/>
            <person name="Madupu R."/>
            <person name="Angiuoli S.V."/>
            <person name="Durkin A.S."/>
            <person name="Haft D.H."/>
            <person name="Vamathevan J.J."/>
            <person name="Khouri H."/>
            <person name="Utterback T.R."/>
            <person name="Lee C."/>
            <person name="Dimitrov G."/>
            <person name="Jiang L."/>
            <person name="Qin H."/>
            <person name="Weidman J."/>
            <person name="Tran K."/>
            <person name="Kang K.H."/>
            <person name="Hance I.R."/>
            <person name="Nelson K.E."/>
            <person name="Fraser C.M."/>
        </authorList>
    </citation>
    <scope>NUCLEOTIDE SEQUENCE [LARGE SCALE GENOMIC DNA]</scope>
    <source>
        <strain>COL</strain>
    </source>
</reference>
<comment type="function">
    <text evidence="2">Destroys superoxide anion radicals which are normally produced within the cells and which are toxic to biological systems. Catalyzes the dismutation of superoxide anion radicals into O2 and H2O2 by successive reduction and oxidation of the transition metal ion at the active site.</text>
</comment>
<comment type="catalytic activity">
    <reaction evidence="2">
        <text>2 superoxide + 2 H(+) = H2O2 + O2</text>
        <dbReference type="Rhea" id="RHEA:20696"/>
        <dbReference type="ChEBI" id="CHEBI:15378"/>
        <dbReference type="ChEBI" id="CHEBI:15379"/>
        <dbReference type="ChEBI" id="CHEBI:16240"/>
        <dbReference type="ChEBI" id="CHEBI:18421"/>
        <dbReference type="EC" id="1.15.1.1"/>
    </reaction>
    <physiologicalReaction direction="left-to-right" evidence="2">
        <dbReference type="Rhea" id="RHEA:20697"/>
    </physiologicalReaction>
</comment>
<comment type="cofactor">
    <cofactor evidence="2">
        <name>Mn(2+)</name>
        <dbReference type="ChEBI" id="CHEBI:29035"/>
    </cofactor>
    <cofactor evidence="2">
        <name>Fe(3+)</name>
        <dbReference type="ChEBI" id="CHEBI:29034"/>
    </cofactor>
    <text evidence="2">Binds 1 Mn(2+) or Fe(3+) ion per subunit.</text>
</comment>
<comment type="subunit">
    <text evidence="1">Homodimer. Can also form a heterodimer with SodM (By similarity).</text>
</comment>
<comment type="similarity">
    <text evidence="3">Belongs to the iron/manganese superoxide dismutase family.</text>
</comment>
<evidence type="ECO:0000250" key="1"/>
<evidence type="ECO:0000250" key="2">
    <source>
        <dbReference type="UniProtKB" id="P80293"/>
    </source>
</evidence>
<evidence type="ECO:0000305" key="3"/>
<sequence>MAFELPKLPYAFDALEPHFDKETMEIHHDRHHNTYVTKLNAAVEGTDLESKSIEEIVANLDSVPANIQTAVRNNGGGHLNHSLFWELLSPNSEEKGTVVEKIKEQWGSLEEFKKEFADKAAARFGSGWAWLVVNNGQLEIVTTPNQDNPLTEGKTPILGLDVWEHAYYLKYQNKRPDYIGAFWNVVNWEKVDELYNATK</sequence>
<dbReference type="EC" id="1.15.1.1" evidence="2"/>
<dbReference type="EMBL" id="CP000046">
    <property type="protein sequence ID" value="AAW38226.1"/>
    <property type="molecule type" value="Genomic_DNA"/>
</dbReference>
<dbReference type="RefSeq" id="WP_000863556.1">
    <property type="nucleotide sequence ID" value="NZ_JBGOFO010000003.1"/>
</dbReference>
<dbReference type="SMR" id="Q5HFK7"/>
<dbReference type="KEGG" id="sac:SACOL1610"/>
<dbReference type="HOGENOM" id="CLU_031625_0_1_9"/>
<dbReference type="Proteomes" id="UP000000530">
    <property type="component" value="Chromosome"/>
</dbReference>
<dbReference type="GO" id="GO:0005737">
    <property type="term" value="C:cytoplasm"/>
    <property type="evidence" value="ECO:0007669"/>
    <property type="project" value="TreeGrafter"/>
</dbReference>
<dbReference type="GO" id="GO:0046872">
    <property type="term" value="F:metal ion binding"/>
    <property type="evidence" value="ECO:0007669"/>
    <property type="project" value="UniProtKB-KW"/>
</dbReference>
<dbReference type="GO" id="GO:0004784">
    <property type="term" value="F:superoxide dismutase activity"/>
    <property type="evidence" value="ECO:0007669"/>
    <property type="project" value="UniProtKB-EC"/>
</dbReference>
<dbReference type="FunFam" id="1.10.287.990:FF:000001">
    <property type="entry name" value="Superoxide dismutase"/>
    <property type="match status" value="1"/>
</dbReference>
<dbReference type="FunFam" id="3.55.40.20:FF:000001">
    <property type="entry name" value="Superoxide dismutase"/>
    <property type="match status" value="1"/>
</dbReference>
<dbReference type="Gene3D" id="1.10.287.990">
    <property type="entry name" value="Fe,Mn superoxide dismutase (SOD) domain"/>
    <property type="match status" value="1"/>
</dbReference>
<dbReference type="Gene3D" id="3.55.40.20">
    <property type="entry name" value="Iron/manganese superoxide dismutase, C-terminal domain"/>
    <property type="match status" value="1"/>
</dbReference>
<dbReference type="InterPro" id="IPR001189">
    <property type="entry name" value="Mn/Fe_SOD"/>
</dbReference>
<dbReference type="InterPro" id="IPR019833">
    <property type="entry name" value="Mn/Fe_SOD_BS"/>
</dbReference>
<dbReference type="InterPro" id="IPR019832">
    <property type="entry name" value="Mn/Fe_SOD_C"/>
</dbReference>
<dbReference type="InterPro" id="IPR019831">
    <property type="entry name" value="Mn/Fe_SOD_N"/>
</dbReference>
<dbReference type="InterPro" id="IPR036324">
    <property type="entry name" value="Mn/Fe_SOD_N_sf"/>
</dbReference>
<dbReference type="InterPro" id="IPR036314">
    <property type="entry name" value="SOD_C_sf"/>
</dbReference>
<dbReference type="PANTHER" id="PTHR43595">
    <property type="entry name" value="37S RIBOSOMAL PROTEIN S26, MITOCHONDRIAL"/>
    <property type="match status" value="1"/>
</dbReference>
<dbReference type="PANTHER" id="PTHR43595:SF2">
    <property type="entry name" value="SMALL RIBOSOMAL SUBUNIT PROTEIN MS42"/>
    <property type="match status" value="1"/>
</dbReference>
<dbReference type="Pfam" id="PF02777">
    <property type="entry name" value="Sod_Fe_C"/>
    <property type="match status" value="1"/>
</dbReference>
<dbReference type="Pfam" id="PF00081">
    <property type="entry name" value="Sod_Fe_N"/>
    <property type="match status" value="1"/>
</dbReference>
<dbReference type="PIRSF" id="PIRSF000349">
    <property type="entry name" value="SODismutase"/>
    <property type="match status" value="1"/>
</dbReference>
<dbReference type="PRINTS" id="PR01703">
    <property type="entry name" value="MNSODISMTASE"/>
</dbReference>
<dbReference type="SUPFAM" id="SSF54719">
    <property type="entry name" value="Fe,Mn superoxide dismutase (SOD), C-terminal domain"/>
    <property type="match status" value="1"/>
</dbReference>
<dbReference type="SUPFAM" id="SSF46609">
    <property type="entry name" value="Fe,Mn superoxide dismutase (SOD), N-terminal domain"/>
    <property type="match status" value="1"/>
</dbReference>
<dbReference type="PROSITE" id="PS00088">
    <property type="entry name" value="SOD_MN"/>
    <property type="match status" value="1"/>
</dbReference>
<protein>
    <recommendedName>
        <fullName>Superoxide dismutase [Mn/Fe] 1</fullName>
        <ecNumber evidence="2">1.15.1.1</ecNumber>
    </recommendedName>
</protein>
<accession>Q5HFK7</accession>